<keyword id="KW-0002">3D-structure</keyword>
<keyword id="KW-0028">Amino-acid biosynthesis</keyword>
<keyword id="KW-0413">Isomerase</keyword>
<keyword id="KW-0460">Magnesium</keyword>
<keyword id="KW-0479">Metal-binding</keyword>
<keyword id="KW-0486">Methionine biosynthesis</keyword>
<keyword id="KW-1185">Reference proteome</keyword>
<evidence type="ECO:0000269" key="1">
    <source>
    </source>
</evidence>
<evidence type="ECO:0000305" key="2"/>
<evidence type="ECO:0007829" key="3">
    <source>
        <dbReference type="PDB" id="2OEM"/>
    </source>
</evidence>
<comment type="function">
    <text evidence="1">Catalyzes the enolization of 2,3-diketo-5-methylthiopentyl-1-phosphate (DK-MTP-1-P) into 2-hydroxy-3-keto-5-methylthiopentenyl-1-phosphate (HK-MTPenyl-1-P).</text>
</comment>
<comment type="catalytic activity">
    <reaction>
        <text>5-methylsulfanyl-2,3-dioxopentyl phosphate = 2-hydroxy-5-methylsulfanyl-3-oxopent-1-enyl phosphate</text>
        <dbReference type="Rhea" id="RHEA:18769"/>
        <dbReference type="ChEBI" id="CHEBI:58828"/>
        <dbReference type="ChEBI" id="CHEBI:59505"/>
        <dbReference type="EC" id="5.3.2.5"/>
    </reaction>
</comment>
<comment type="cofactor">
    <cofactor evidence="1">
        <name>Mg(2+)</name>
        <dbReference type="ChEBI" id="CHEBI:18420"/>
    </cofactor>
    <text evidence="1">Binds 1 Mg(2+) ion per subunit.</text>
</comment>
<comment type="pathway">
    <text>Amino-acid biosynthesis; L-methionine biosynthesis via salvage pathway; L-methionine from S-methyl-5-thio-alpha-D-ribose 1-phosphate: step 3/6.</text>
</comment>
<comment type="subunit">
    <text evidence="1">Homodimer.</text>
</comment>
<comment type="miscellaneous">
    <text>Has no RuBP-carboxylation activity.</text>
</comment>
<comment type="similarity">
    <text evidence="2">Belongs to the RuBisCO large chain family. Type IV subfamily.</text>
</comment>
<name>MTNW_GEOKA</name>
<proteinExistence type="evidence at protein level"/>
<dbReference type="EC" id="5.3.2.5"/>
<dbReference type="EMBL" id="BA000043">
    <property type="protein sequence ID" value="BAD75238.1"/>
    <property type="molecule type" value="Genomic_DNA"/>
</dbReference>
<dbReference type="RefSeq" id="WP_011230454.1">
    <property type="nucleotide sequence ID" value="NC_006510.1"/>
</dbReference>
<dbReference type="PDB" id="2OEJ">
    <property type="method" value="X-ray"/>
    <property type="resolution" value="2.55 A"/>
    <property type="chains" value="A/B=1-413"/>
</dbReference>
<dbReference type="PDB" id="2OEK">
    <property type="method" value="X-ray"/>
    <property type="resolution" value="1.80 A"/>
    <property type="chains" value="A/B=1-413"/>
</dbReference>
<dbReference type="PDB" id="2OEL">
    <property type="method" value="X-ray"/>
    <property type="resolution" value="1.80 A"/>
    <property type="chains" value="A/B=1-413"/>
</dbReference>
<dbReference type="PDB" id="2OEM">
    <property type="method" value="X-ray"/>
    <property type="resolution" value="1.70 A"/>
    <property type="chains" value="A/B=1-413"/>
</dbReference>
<dbReference type="PDBsum" id="2OEJ"/>
<dbReference type="PDBsum" id="2OEK"/>
<dbReference type="PDBsum" id="2OEL"/>
<dbReference type="PDBsum" id="2OEM"/>
<dbReference type="SMR" id="Q5L1E2"/>
<dbReference type="STRING" id="235909.GK0953"/>
<dbReference type="DrugBank" id="DB06881">
    <property type="generic name" value="(1Z)-2-HYDROXY-3-OXOHEX-1-EN-1-YL DIHYDROGEN PHOSPHATE"/>
</dbReference>
<dbReference type="KEGG" id="gka:GK0953"/>
<dbReference type="PATRIC" id="fig|235909.7.peg.1041"/>
<dbReference type="eggNOG" id="COG1850">
    <property type="taxonomic scope" value="Bacteria"/>
</dbReference>
<dbReference type="HOGENOM" id="CLU_031450_3_1_9"/>
<dbReference type="BRENDA" id="5.3.2.5">
    <property type="organism ID" value="8138"/>
</dbReference>
<dbReference type="UniPathway" id="UPA00904">
    <property type="reaction ID" value="UER00876"/>
</dbReference>
<dbReference type="EvolutionaryTrace" id="Q5L1E2"/>
<dbReference type="Proteomes" id="UP000001172">
    <property type="component" value="Chromosome"/>
</dbReference>
<dbReference type="GO" id="GO:0043715">
    <property type="term" value="F:2,3-diketo-5-methylthiopentyl-1-phosphate enolase activity"/>
    <property type="evidence" value="ECO:0007669"/>
    <property type="project" value="UniProtKB-UniRule"/>
</dbReference>
<dbReference type="GO" id="GO:0000287">
    <property type="term" value="F:magnesium ion binding"/>
    <property type="evidence" value="ECO:0007669"/>
    <property type="project" value="UniProtKB-UniRule"/>
</dbReference>
<dbReference type="GO" id="GO:0016984">
    <property type="term" value="F:ribulose-bisphosphate carboxylase activity"/>
    <property type="evidence" value="ECO:0007669"/>
    <property type="project" value="InterPro"/>
</dbReference>
<dbReference type="GO" id="GO:0015977">
    <property type="term" value="P:carbon fixation"/>
    <property type="evidence" value="ECO:0007669"/>
    <property type="project" value="InterPro"/>
</dbReference>
<dbReference type="GO" id="GO:0019509">
    <property type="term" value="P:L-methionine salvage from methylthioadenosine"/>
    <property type="evidence" value="ECO:0007669"/>
    <property type="project" value="UniProtKB-UniRule"/>
</dbReference>
<dbReference type="CDD" id="cd08209">
    <property type="entry name" value="RLP_DK-MTP-1-P-enolase"/>
    <property type="match status" value="1"/>
</dbReference>
<dbReference type="Gene3D" id="3.20.20.110">
    <property type="entry name" value="Ribulose bisphosphate carboxylase, large subunit, C-terminal domain"/>
    <property type="match status" value="1"/>
</dbReference>
<dbReference type="Gene3D" id="3.30.70.150">
    <property type="entry name" value="RuBisCO large subunit, N-terminal domain"/>
    <property type="match status" value="1"/>
</dbReference>
<dbReference type="HAMAP" id="MF_01679">
    <property type="entry name" value="Salvage_MtnW"/>
    <property type="match status" value="1"/>
</dbReference>
<dbReference type="InterPro" id="IPR017717">
    <property type="entry name" value="Diketo-Methiopentyl-P_enolase"/>
</dbReference>
<dbReference type="InterPro" id="IPR033966">
    <property type="entry name" value="RuBisCO"/>
</dbReference>
<dbReference type="InterPro" id="IPR000685">
    <property type="entry name" value="RuBisCO_lsu_C"/>
</dbReference>
<dbReference type="InterPro" id="IPR036376">
    <property type="entry name" value="RuBisCO_lsu_C_sf"/>
</dbReference>
<dbReference type="InterPro" id="IPR017443">
    <property type="entry name" value="RuBisCO_lsu_fd_N"/>
</dbReference>
<dbReference type="InterPro" id="IPR036422">
    <property type="entry name" value="RuBisCO_lsu_N_sf"/>
</dbReference>
<dbReference type="NCBIfam" id="NF007095">
    <property type="entry name" value="PRK09549.1"/>
    <property type="match status" value="1"/>
</dbReference>
<dbReference type="NCBIfam" id="TIGR03332">
    <property type="entry name" value="salvage_mtnW"/>
    <property type="match status" value="1"/>
</dbReference>
<dbReference type="PANTHER" id="PTHR42704">
    <property type="entry name" value="RIBULOSE BISPHOSPHATE CARBOXYLASE"/>
    <property type="match status" value="1"/>
</dbReference>
<dbReference type="PANTHER" id="PTHR42704:SF17">
    <property type="entry name" value="RIBULOSE BISPHOSPHATE CARBOXYLASE LARGE CHAIN"/>
    <property type="match status" value="1"/>
</dbReference>
<dbReference type="Pfam" id="PF00016">
    <property type="entry name" value="RuBisCO_large"/>
    <property type="match status" value="1"/>
</dbReference>
<dbReference type="Pfam" id="PF02788">
    <property type="entry name" value="RuBisCO_large_N"/>
    <property type="match status" value="1"/>
</dbReference>
<dbReference type="SFLD" id="SFLDF00157">
    <property type="entry name" value="2_3-diketo-5-methylthiopentyl"/>
    <property type="match status" value="1"/>
</dbReference>
<dbReference type="SFLD" id="SFLDG00301">
    <property type="entry name" value="RuBisCO-like_proteins"/>
    <property type="match status" value="1"/>
</dbReference>
<dbReference type="SUPFAM" id="SSF51649">
    <property type="entry name" value="RuBisCo, C-terminal domain"/>
    <property type="match status" value="1"/>
</dbReference>
<dbReference type="SUPFAM" id="SSF54966">
    <property type="entry name" value="RuBisCO, large subunit, small (N-terminal) domain"/>
    <property type="match status" value="1"/>
</dbReference>
<sequence length="413" mass="44906">MSAVMATYLLHDETDIRKKAEGIALGLTIGTWTDLPALEQEQLRKHKGEVVAIEELGESERVNAYFGKRLKRAIVKIAYPTVNFSADLPALLVTTFGKLSLDGEVRLLDLEFPDEWKRQFPGPRFGIDGIRDRVGVHNRPLLMSIFKGMIGRDLAYLTSELKKQALGGVDLVKDDEILFDSELLPFEKRITEGKAALQEVYEQTGKRTLYAVNLTGKTFALKDKAKRAAELGADVLLFNVFAYGLDVLQALREDEEIAVPIMAHPAFSGAVTPSEFYGVAPSLWLGKLLRLAGADFVLFPSPYGSVALEREQALGIARALTDDQEPFARAFPVPSAGIHPGLVPLIIRDFGLDTIVNAGGGIHGHPDGAIGGGRAFRAAIDAVLAGRPLRAAAAENEALQKAIDRWGVVEVEA</sequence>
<reference key="1">
    <citation type="journal article" date="2004" name="Nucleic Acids Res.">
        <title>Thermoadaptation trait revealed by the genome sequence of thermophilic Geobacillus kaustophilus.</title>
        <authorList>
            <person name="Takami H."/>
            <person name="Takaki Y."/>
            <person name="Chee G.-J."/>
            <person name="Nishi S."/>
            <person name="Shimamura S."/>
            <person name="Suzuki H."/>
            <person name="Matsui S."/>
            <person name="Uchiyama I."/>
        </authorList>
    </citation>
    <scope>NUCLEOTIDE SEQUENCE [LARGE SCALE GENOMIC DNA]</scope>
    <source>
        <strain>HTA426</strain>
    </source>
</reference>
<reference key="2">
    <citation type="journal article" date="2007" name="Biochemistry">
        <title>Mechanistic diversity in the RuBisCO superfamily: the 'enolase' in the methionine salvage pathway in Geobacillus kaustophilus.</title>
        <authorList>
            <person name="Imker H.J."/>
            <person name="Fedorov A.A."/>
            <person name="Fedorov E.V."/>
            <person name="Almo S.C."/>
            <person name="Gerlt J.A."/>
        </authorList>
    </citation>
    <scope>X-RAY CRYSTALLOGRAPHY (1.7 ANGSTROMS) IN COMPLEX WITH SUBSTRATE ANALOG AND MAGNESIUM IONS</scope>
    <scope>FUNCTION</scope>
    <scope>COFACTOR</scope>
    <scope>SUBUNIT</scope>
    <scope>MUTAGENESIS OF LYS-98; LYS-147 AND LYS-173</scope>
    <scope>CARBOXYLATION AT LYS-173</scope>
</reference>
<organism>
    <name type="scientific">Geobacillus kaustophilus (strain HTA426)</name>
    <dbReference type="NCBI Taxonomy" id="235909"/>
    <lineage>
        <taxon>Bacteria</taxon>
        <taxon>Bacillati</taxon>
        <taxon>Bacillota</taxon>
        <taxon>Bacilli</taxon>
        <taxon>Bacillales</taxon>
        <taxon>Anoxybacillaceae</taxon>
        <taxon>Geobacillus</taxon>
        <taxon>Geobacillus thermoleovorans group</taxon>
    </lineage>
</organism>
<accession>Q5L1E2</accession>
<gene>
    <name type="primary">mtnW</name>
    <name type="ordered locus">GK0953</name>
</gene>
<protein>
    <recommendedName>
        <fullName>2,3-diketo-5-methylthiopentyl-1-phosphate enolase</fullName>
        <shortName>DK-MTP-1-P enolase</shortName>
        <ecNumber>5.3.2.5</ecNumber>
    </recommendedName>
    <alternativeName>
        <fullName>RuBisCO-like protein</fullName>
        <shortName>RLP</shortName>
    </alternativeName>
</protein>
<feature type="chain" id="PRO_0000062694" description="2,3-diketo-5-methylthiopentyl-1-phosphate enolase">
    <location>
        <begin position="1"/>
        <end position="413"/>
    </location>
</feature>
<feature type="active site" description="Proton acceptor">
    <location>
        <position position="98"/>
    </location>
</feature>
<feature type="binding site">
    <location>
        <position position="147"/>
    </location>
    <ligand>
        <name>substrate</name>
    </ligand>
</feature>
<feature type="binding site">
    <location>
        <begin position="173"/>
        <end position="176"/>
    </location>
    <ligand>
        <name>substrate</name>
    </ligand>
</feature>
<feature type="binding site" description="via carbamate group">
    <location>
        <position position="173"/>
    </location>
    <ligand>
        <name>Mg(2+)</name>
        <dbReference type="ChEBI" id="CHEBI:18420"/>
    </ligand>
</feature>
<feature type="binding site">
    <location>
        <position position="175"/>
    </location>
    <ligand>
        <name>Mg(2+)</name>
        <dbReference type="ChEBI" id="CHEBI:18420"/>
    </ligand>
</feature>
<feature type="binding site">
    <location>
        <position position="176"/>
    </location>
    <ligand>
        <name>Mg(2+)</name>
        <dbReference type="ChEBI" id="CHEBI:18420"/>
    </ligand>
</feature>
<feature type="binding site">
    <location>
        <position position="264"/>
    </location>
    <ligand>
        <name>substrate</name>
    </ligand>
</feature>
<feature type="binding site">
    <location>
        <position position="337"/>
    </location>
    <ligand>
        <name>substrate</name>
    </ligand>
</feature>
<feature type="binding site">
    <location>
        <begin position="359"/>
        <end position="360"/>
    </location>
    <ligand>
        <name>substrate</name>
    </ligand>
</feature>
<feature type="modified residue" description="N6-carboxylysine" evidence="1">
    <location>
        <position position="173"/>
    </location>
</feature>
<feature type="mutagenesis site" description="Loss of enolase activity." evidence="1">
    <original>K</original>
    <variation>A</variation>
    <location>
        <position position="98"/>
    </location>
</feature>
<feature type="mutagenesis site" description="Same activity as the wild-type." evidence="1">
    <original>K</original>
    <variation>A</variation>
    <location>
        <position position="147"/>
    </location>
</feature>
<feature type="mutagenesis site" description="Same activity as the wild-type." evidence="1">
    <original>K</original>
    <variation>A</variation>
    <location>
        <position position="173"/>
    </location>
</feature>
<feature type="strand" evidence="3">
    <location>
        <begin position="3"/>
        <end position="14"/>
    </location>
</feature>
<feature type="helix" evidence="3">
    <location>
        <begin position="16"/>
        <end position="26"/>
    </location>
</feature>
<feature type="turn" evidence="3">
    <location>
        <begin position="27"/>
        <end position="29"/>
    </location>
</feature>
<feature type="helix" evidence="3">
    <location>
        <begin position="37"/>
        <end position="43"/>
    </location>
</feature>
<feature type="helix" evidence="3">
    <location>
        <begin position="44"/>
        <end position="46"/>
    </location>
</feature>
<feature type="strand" evidence="3">
    <location>
        <begin position="49"/>
        <end position="55"/>
    </location>
</feature>
<feature type="helix" evidence="3">
    <location>
        <begin position="60"/>
        <end position="66"/>
    </location>
</feature>
<feature type="strand" evidence="3">
    <location>
        <begin position="71"/>
        <end position="80"/>
    </location>
</feature>
<feature type="helix" evidence="3">
    <location>
        <begin position="81"/>
        <end position="83"/>
    </location>
</feature>
<feature type="helix" evidence="3">
    <location>
        <begin position="88"/>
        <end position="96"/>
    </location>
</feature>
<feature type="helix" evidence="3">
    <location>
        <begin position="98"/>
        <end position="101"/>
    </location>
</feature>
<feature type="strand" evidence="3">
    <location>
        <begin position="102"/>
        <end position="111"/>
    </location>
</feature>
<feature type="helix" evidence="3">
    <location>
        <begin position="114"/>
        <end position="117"/>
    </location>
</feature>
<feature type="helix" evidence="3">
    <location>
        <begin position="126"/>
        <end position="134"/>
    </location>
</feature>
<feature type="strand" evidence="3">
    <location>
        <begin position="141"/>
        <end position="145"/>
    </location>
</feature>
<feature type="helix" evidence="3">
    <location>
        <begin position="154"/>
        <end position="166"/>
    </location>
</feature>
<feature type="strand" evidence="3">
    <location>
        <begin position="170"/>
        <end position="173"/>
    </location>
</feature>
<feature type="strand" evidence="3">
    <location>
        <begin position="182"/>
        <end position="184"/>
    </location>
</feature>
<feature type="helix" evidence="3">
    <location>
        <begin position="186"/>
        <end position="204"/>
    </location>
</feature>
<feature type="strand" evidence="3">
    <location>
        <begin position="209"/>
        <end position="213"/>
    </location>
</feature>
<feature type="helix" evidence="3">
    <location>
        <begin position="218"/>
        <end position="220"/>
    </location>
</feature>
<feature type="helix" evidence="3">
    <location>
        <begin position="221"/>
        <end position="230"/>
    </location>
</feature>
<feature type="strand" evidence="3">
    <location>
        <begin position="234"/>
        <end position="238"/>
    </location>
</feature>
<feature type="helix" evidence="3">
    <location>
        <begin position="240"/>
        <end position="242"/>
    </location>
</feature>
<feature type="helix" evidence="3">
    <location>
        <begin position="245"/>
        <end position="253"/>
    </location>
</feature>
<feature type="turn" evidence="3">
    <location>
        <begin position="255"/>
        <end position="257"/>
    </location>
</feature>
<feature type="strand" evidence="3">
    <location>
        <begin position="261"/>
        <end position="263"/>
    </location>
</feature>
<feature type="helix" evidence="3">
    <location>
        <begin position="268"/>
        <end position="270"/>
    </location>
</feature>
<feature type="strand" evidence="3">
    <location>
        <begin position="275"/>
        <end position="279"/>
    </location>
</feature>
<feature type="helix" evidence="3">
    <location>
        <begin position="281"/>
        <end position="284"/>
    </location>
</feature>
<feature type="helix" evidence="3">
    <location>
        <begin position="287"/>
        <end position="292"/>
    </location>
</feature>
<feature type="strand" evidence="3">
    <location>
        <begin position="295"/>
        <end position="300"/>
    </location>
</feature>
<feature type="strand" evidence="3">
    <location>
        <begin position="302"/>
        <end position="306"/>
    </location>
</feature>
<feature type="helix" evidence="3">
    <location>
        <begin position="310"/>
        <end position="321"/>
    </location>
</feature>
<feature type="strand" evidence="3">
    <location>
        <begin position="325"/>
        <end position="327"/>
    </location>
</feature>
<feature type="strand" evidence="3">
    <location>
        <begin position="331"/>
        <end position="337"/>
    </location>
</feature>
<feature type="helix" evidence="3">
    <location>
        <begin position="340"/>
        <end position="342"/>
    </location>
</feature>
<feature type="helix" evidence="3">
    <location>
        <begin position="343"/>
        <end position="350"/>
    </location>
</feature>
<feature type="strand" evidence="3">
    <location>
        <begin position="352"/>
        <end position="359"/>
    </location>
</feature>
<feature type="helix" evidence="3">
    <location>
        <begin position="360"/>
        <end position="363"/>
    </location>
</feature>
<feature type="helix" evidence="3">
    <location>
        <begin position="368"/>
        <end position="385"/>
    </location>
</feature>
<feature type="helix" evidence="3">
    <location>
        <begin position="389"/>
        <end position="393"/>
    </location>
</feature>
<feature type="helix" evidence="3">
    <location>
        <begin position="397"/>
        <end position="406"/>
    </location>
</feature>